<feature type="chain" id="PRO_0000089776" description="Cip1-interacting zinc finger protein">
    <location>
        <begin position="1"/>
        <end position="898"/>
    </location>
</feature>
<feature type="zinc finger region" description="Matrin-type" evidence="1">
    <location>
        <begin position="799"/>
        <end position="830"/>
    </location>
</feature>
<feature type="region of interest" description="Disordered" evidence="2">
    <location>
        <begin position="48"/>
        <end position="69"/>
    </location>
</feature>
<feature type="region of interest" description="Disordered" evidence="2">
    <location>
        <begin position="157"/>
        <end position="305"/>
    </location>
</feature>
<feature type="region of interest" description="Disordered" evidence="2">
    <location>
        <begin position="318"/>
        <end position="471"/>
    </location>
</feature>
<feature type="region of interest" description="Disordered" evidence="2">
    <location>
        <begin position="562"/>
        <end position="584"/>
    </location>
</feature>
<feature type="region of interest" description="Disordered" evidence="2">
    <location>
        <begin position="859"/>
        <end position="898"/>
    </location>
</feature>
<feature type="compositionally biased region" description="Polar residues" evidence="2">
    <location>
        <begin position="170"/>
        <end position="203"/>
    </location>
</feature>
<feature type="compositionally biased region" description="Basic and acidic residues" evidence="2">
    <location>
        <begin position="263"/>
        <end position="273"/>
    </location>
</feature>
<feature type="compositionally biased region" description="Low complexity" evidence="2">
    <location>
        <begin position="318"/>
        <end position="327"/>
    </location>
</feature>
<feature type="compositionally biased region" description="Polar residues" evidence="2">
    <location>
        <begin position="328"/>
        <end position="351"/>
    </location>
</feature>
<feature type="compositionally biased region" description="Low complexity" evidence="2">
    <location>
        <begin position="355"/>
        <end position="383"/>
    </location>
</feature>
<feature type="compositionally biased region" description="Polar residues" evidence="2">
    <location>
        <begin position="384"/>
        <end position="395"/>
    </location>
</feature>
<feature type="compositionally biased region" description="Low complexity" evidence="2">
    <location>
        <begin position="402"/>
        <end position="435"/>
    </location>
</feature>
<feature type="compositionally biased region" description="Polar residues" evidence="2">
    <location>
        <begin position="436"/>
        <end position="445"/>
    </location>
</feature>
<feature type="compositionally biased region" description="Low complexity" evidence="2">
    <location>
        <begin position="572"/>
        <end position="584"/>
    </location>
</feature>
<feature type="compositionally biased region" description="Polar residues" evidence="2">
    <location>
        <begin position="859"/>
        <end position="879"/>
    </location>
</feature>
<feature type="modified residue" description="Phosphoserine" evidence="11">
    <location>
        <position position="209"/>
    </location>
</feature>
<feature type="modified residue" description="Phosphothreonine" evidence="11">
    <location>
        <position position="244"/>
    </location>
</feature>
<feature type="modified residue" description="Phosphoserine" evidence="11">
    <location>
        <position position="350"/>
    </location>
</feature>
<feature type="modified residue" description="Phosphoserine" evidence="11">
    <location>
        <position position="547"/>
    </location>
</feature>
<feature type="modified residue" description="Phosphothreonine" evidence="10">
    <location>
        <position position="567"/>
    </location>
</feature>
<feature type="modified residue" description="Phosphoserine" evidence="11">
    <location>
        <position position="821"/>
    </location>
</feature>
<feature type="modified residue" description="Phosphoserine" evidence="11">
    <location>
        <position position="838"/>
    </location>
</feature>
<feature type="cross-link" description="Glycyl lysine isopeptide (Lys-Gly) (interchain with G-Cter in SUMO2)" evidence="15">
    <location>
        <position position="280"/>
    </location>
</feature>
<feature type="cross-link" description="Glycyl lysine isopeptide (Lys-Gly) (interchain with G-Cter in SUMO2)" evidence="15">
    <location>
        <position position="340"/>
    </location>
</feature>
<feature type="cross-link" description="Glycyl lysine isopeptide (Lys-Gly) (interchain with G-Cter in SUMO2)" evidence="15">
    <location>
        <position position="401"/>
    </location>
</feature>
<feature type="cross-link" description="Glycyl lysine isopeptide (Lys-Gly) (interchain with G-Cter in SUMO2)" evidence="15">
    <location>
        <position position="549"/>
    </location>
</feature>
<feature type="cross-link" description="Glycyl lysine isopeptide (Lys-Gly) (interchain with G-Cter in SUMO2)" evidence="15">
    <location>
        <position position="588"/>
    </location>
</feature>
<feature type="cross-link" description="Glycyl lysine isopeptide (Lys-Gly) (interchain with G-Cter in SUMO2)" evidence="15">
    <location>
        <position position="680"/>
    </location>
</feature>
<feature type="cross-link" description="Glycyl lysine isopeptide (Lys-Gly) (interchain with G-Cter in SUMO2)" evidence="12 13 14 15">
    <location>
        <position position="705"/>
    </location>
</feature>
<feature type="cross-link" description="Glycyl lysine isopeptide (Lys-Gly) (interchain with G-Cter in SUMO2)" evidence="15">
    <location>
        <position position="830"/>
    </location>
</feature>
<feature type="cross-link" description="Glycyl lysine isopeptide (Lys-Gly) (interchain with G-Cter in SUMO2)" evidence="15">
    <location>
        <position position="879"/>
    </location>
</feature>
<feature type="splice variant" id="VSP_044729" description="In isoform 5." evidence="7">
    <location>
        <begin position="1"/>
        <end position="101"/>
    </location>
</feature>
<feature type="splice variant" id="VSP_004164" description="In isoform 2 and isoform 3." evidence="6 8">
    <location>
        <begin position="97"/>
        <end position="120"/>
    </location>
</feature>
<feature type="splice variant" id="VSP_004165" description="In isoform 2." evidence="6">
    <location>
        <begin position="197"/>
        <end position="201"/>
    </location>
</feature>
<feature type="splice variant" id="VSP_039894" description="In isoform 3 and isoform 4." evidence="7 8">
    <location>
        <begin position="377"/>
        <end position="432"/>
    </location>
</feature>
<feature type="sequence variant" id="VAR_067971" description="Found in patients with adult onset primary cervical dystonia; likely pathogenic." evidence="4">
    <original>P</original>
    <variation>S</variation>
    <location>
        <position position="47"/>
    </location>
</feature>
<feature type="sequence variant" id="VAR_067972" description="In dbSNP:rs747696276." evidence="4">
    <original>P</original>
    <variation>L</variation>
    <location>
        <position position="50"/>
    </location>
</feature>
<feature type="sequence variant" id="VAR_056820" description="In dbSNP:rs45588035." evidence="5">
    <original>A</original>
    <variation>T</variation>
    <location>
        <position position="219"/>
    </location>
</feature>
<feature type="sequence variant" id="VAR_067973" description="Found in a family with adult onset primary cervical dystonia; likely pathogenic; exonic splicing enhancer mutation resulting in altered CIZ1 splicing pattern; dbSNP:rs397514566." evidence="4">
    <original>S</original>
    <variation>G</variation>
    <location>
        <position position="264"/>
    </location>
</feature>
<feature type="sequence variant" id="VAR_063105" description="In dbSNP:rs45554035." evidence="5">
    <original>E</original>
    <variation>G</variation>
    <location>
        <position position="370"/>
    </location>
</feature>
<feature type="sequence variant" id="VAR_067974" description="In dbSNP:rs200010931." evidence="4">
    <original>Q</original>
    <variation>E</variation>
    <location>
        <position position="394"/>
    </location>
</feature>
<feature type="sequence variant" id="VAR_067975" description="In dbSNP:rs780188256." evidence="4">
    <original>S</original>
    <variation>F</variation>
    <location>
        <position position="577"/>
    </location>
</feature>
<feature type="sequence variant" id="VAR_056821" description="In dbSNP:rs12334." evidence="5">
    <original>S</original>
    <variation>F</variation>
    <location>
        <position position="578"/>
    </location>
</feature>
<feature type="sequence variant" id="VAR_056822" description="In dbSNP:rs11549266." evidence="3 5">
    <original>V</original>
    <variation>M</variation>
    <location>
        <position position="638"/>
    </location>
</feature>
<feature type="sequence variant" id="VAR_067976" description="Found in patients with adult onset primary cervical dystonia; likely pathogenic." evidence="4">
    <original>R</original>
    <variation>M</variation>
    <location>
        <position position="672"/>
    </location>
</feature>
<feature type="sequence variant" id="VAR_063106" description="In dbSNP:rs11549260." evidence="5">
    <original>R</original>
    <variation>Q</variation>
    <location>
        <position position="847"/>
    </location>
</feature>
<feature type="sequence conflict" description="In Ref. 7; AAF23231." evidence="9" ref="7">
    <location>
        <position position="9"/>
    </location>
</feature>
<feature type="sequence conflict" description="In Ref. 7; AAF23231." evidence="9" ref="7">
    <original>L</original>
    <variation>S</variation>
    <location>
        <position position="35"/>
    </location>
</feature>
<feature type="sequence conflict" description="In Ref. 3; BAB14750." evidence="9" ref="3">
    <original>A</original>
    <variation>V</variation>
    <location>
        <position position="101"/>
    </location>
</feature>
<feature type="sequence conflict" description="In Ref. 1; BAA85783." evidence="9" ref="1">
    <original>P</original>
    <variation>L</variation>
    <location>
        <position position="232"/>
    </location>
</feature>
<feature type="sequence conflict" description="In Ref. 7; AAF37882." evidence="9" ref="7">
    <original>G</original>
    <variation>S</variation>
    <location>
        <position position="500"/>
    </location>
</feature>
<feature type="sequence conflict" description="In Ref. 3; BAG64643." evidence="9" ref="3">
    <original>K</original>
    <variation>E</variation>
    <location>
        <position position="549"/>
    </location>
</feature>
<feature type="sequence conflict" description="In Ref. 1; BAA85783." evidence="9" ref="1">
    <original>S</original>
    <variation>G</variation>
    <location>
        <position position="555"/>
    </location>
</feature>
<feature type="sequence conflict" description="In Ref. 7; AAF23231." evidence="9" ref="7">
    <original>P</original>
    <variation>L</variation>
    <location>
        <position position="568"/>
    </location>
</feature>
<feature type="sequence conflict" description="In Ref. 7; AAF23231." evidence="9" ref="7">
    <original>S</original>
    <variation>P</variation>
    <location>
        <position position="634"/>
    </location>
</feature>
<feature type="sequence conflict" description="In Ref. 7; AAF37882." evidence="9" ref="7">
    <original>K</original>
    <variation>R</variation>
    <location>
        <position position="677"/>
    </location>
</feature>
<feature type="sequence conflict" description="In Ref. 3; BAB14750." evidence="9" ref="3">
    <original>I</original>
    <variation>V</variation>
    <location>
        <position position="678"/>
    </location>
</feature>
<feature type="sequence conflict" description="In Ref. 3; BAB14750." evidence="9" ref="3">
    <original>S</original>
    <variation>P</variation>
    <location>
        <position position="682"/>
    </location>
</feature>
<feature type="sequence conflict" description="In Ref. 8; CAB44346." evidence="9" ref="8">
    <original>R</original>
    <variation>L</variation>
    <location>
        <position position="698"/>
    </location>
</feature>
<feature type="sequence conflict" description="In Ref. 7; AAF23231." evidence="9" ref="7">
    <original>D</original>
    <variation>G</variation>
    <location>
        <position position="735"/>
    </location>
</feature>
<feature type="sequence conflict" description="In Ref. 3; BAB14750." evidence="9" ref="3">
    <original>E</original>
    <variation>K</variation>
    <location>
        <position position="757"/>
    </location>
</feature>
<feature type="sequence conflict" description="In Ref. 7; AAF37882." evidence="9" ref="7">
    <original>S</original>
    <variation>N</variation>
    <location>
        <position position="810"/>
    </location>
</feature>
<feature type="strand" evidence="16">
    <location>
        <begin position="547"/>
        <end position="553"/>
    </location>
</feature>
<feature type="strand" evidence="16">
    <location>
        <begin position="559"/>
        <end position="566"/>
    </location>
</feature>
<proteinExistence type="evidence at protein level"/>
<organism>
    <name type="scientific">Homo sapiens</name>
    <name type="common">Human</name>
    <dbReference type="NCBI Taxonomy" id="9606"/>
    <lineage>
        <taxon>Eukaryota</taxon>
        <taxon>Metazoa</taxon>
        <taxon>Chordata</taxon>
        <taxon>Craniata</taxon>
        <taxon>Vertebrata</taxon>
        <taxon>Euteleostomi</taxon>
        <taxon>Mammalia</taxon>
        <taxon>Eutheria</taxon>
        <taxon>Euarchontoglires</taxon>
        <taxon>Primates</taxon>
        <taxon>Haplorrhini</taxon>
        <taxon>Catarrhini</taxon>
        <taxon>Hominidae</taxon>
        <taxon>Homo</taxon>
    </lineage>
</organism>
<comment type="function">
    <text>May regulate the subcellular localization of CIP/WAF1.</text>
</comment>
<comment type="subunit">
    <text>Interacts with CIP/WAF1.</text>
</comment>
<comment type="interaction">
    <interactant intactId="EBI-2652948">
        <id>Q9ULV3</id>
    </interactant>
    <interactant intactId="EBI-1049513">
        <id>Q9P0V3</id>
        <label>SH3BP4</label>
    </interactant>
    <organismsDiffer>false</organismsDiffer>
    <experiments>2</experiments>
</comment>
<comment type="subcellular location">
    <subcellularLocation>
        <location>Nucleus</location>
    </subcellularLocation>
</comment>
<comment type="alternative products">
    <event type="alternative splicing"/>
    <isoform>
        <id>Q9ULV3-1</id>
        <name>1</name>
        <sequence type="displayed"/>
    </isoform>
    <isoform>
        <id>Q9ULV3-2</id>
        <name>2</name>
        <name>NP94B</name>
        <sequence type="described" ref="VSP_004164 VSP_004165"/>
    </isoform>
    <isoform>
        <id>Q9ULV3-3</id>
        <name>3</name>
        <sequence type="described" ref="VSP_004164 VSP_039894"/>
    </isoform>
    <isoform>
        <id>Q9ULV3-4</id>
        <name>4</name>
        <sequence type="described" ref="VSP_039894"/>
    </isoform>
    <isoform>
        <id>Q9ULV3-5</id>
        <name>5</name>
        <sequence type="described" ref="VSP_044729"/>
    </isoform>
</comment>
<comment type="disease">
    <text>Defects in CIZ1 may be a cause of adult onset primary cervical dystonia. Dystonia is defined by the presence of sustained involuntary muscle contractions, often leading to abnormal postures. Cervical dystonia or spasmodic torticollis, the most common form of focal dystonia, is characterized by involuntary contractions of the neck muscles, which produce abnormal posturing of the head upon the trunk.</text>
</comment>
<comment type="sequence caution" evidence="9">
    <conflict type="erroneous initiation">
        <sequence resource="EMBL-CDS" id="AAF23231"/>
    </conflict>
    <text>Truncated N-terminus.</text>
</comment>
<comment type="sequence caution" evidence="9">
    <conflict type="erroneous initiation">
        <sequence resource="EMBL-CDS" id="AAF37882"/>
    </conflict>
    <text>Truncated N-terminus.</text>
</comment>
<name>CIZ1_HUMAN</name>
<gene>
    <name type="primary">CIZ1</name>
    <name type="synonym">LSFR1</name>
    <name type="synonym">NP94</name>
    <name type="synonym">ZNF356</name>
</gene>
<keyword id="KW-0002">3D-structure</keyword>
<keyword id="KW-0025">Alternative splicing</keyword>
<keyword id="KW-0225">Disease variant</keyword>
<keyword id="KW-1023">Dystonia</keyword>
<keyword id="KW-1017">Isopeptide bond</keyword>
<keyword id="KW-0479">Metal-binding</keyword>
<keyword id="KW-0539">Nucleus</keyword>
<keyword id="KW-0597">Phosphoprotein</keyword>
<keyword id="KW-1267">Proteomics identification</keyword>
<keyword id="KW-1185">Reference proteome</keyword>
<keyword id="KW-0832">Ubl conjugation</keyword>
<keyword id="KW-0862">Zinc</keyword>
<keyword id="KW-0863">Zinc-finger</keyword>
<reference key="1">
    <citation type="journal article" date="1999" name="Biochem. Biophys. Res. Commun.">
        <title>Cloning and characterization of a novel p21(Cip1/Waf1)-interacting zinc finger protein, ciz1.</title>
        <authorList>
            <person name="Mitsui K."/>
            <person name="Matsumoto A."/>
            <person name="Ohtsuka S."/>
            <person name="Ohtsubo M."/>
            <person name="Yoshimura A."/>
        </authorList>
    </citation>
    <scope>NUCLEOTIDE SEQUENCE [MRNA] (ISOFORM 1)</scope>
</reference>
<reference key="2">
    <citation type="submission" date="2007-03" db="EMBL/GenBank/DDBJ databases">
        <authorList>
            <consortium name="NIEHS SNPs program"/>
        </authorList>
    </citation>
    <scope>NUCLEOTIDE SEQUENCE [GENOMIC DNA]</scope>
    <scope>VARIANTS THR-219; GLY-370; PHE-578; MET-638 AND GLN-847</scope>
</reference>
<reference key="3">
    <citation type="journal article" date="2004" name="Nat. Genet.">
        <title>Complete sequencing and characterization of 21,243 full-length human cDNAs.</title>
        <authorList>
            <person name="Ota T."/>
            <person name="Suzuki Y."/>
            <person name="Nishikawa T."/>
            <person name="Otsuki T."/>
            <person name="Sugiyama T."/>
            <person name="Irie R."/>
            <person name="Wakamatsu A."/>
            <person name="Hayashi K."/>
            <person name="Sato H."/>
            <person name="Nagai K."/>
            <person name="Kimura K."/>
            <person name="Makita H."/>
            <person name="Sekine M."/>
            <person name="Obayashi M."/>
            <person name="Nishi T."/>
            <person name="Shibahara T."/>
            <person name="Tanaka T."/>
            <person name="Ishii S."/>
            <person name="Yamamoto J."/>
            <person name="Saito K."/>
            <person name="Kawai Y."/>
            <person name="Isono Y."/>
            <person name="Nakamura Y."/>
            <person name="Nagahari K."/>
            <person name="Murakami K."/>
            <person name="Yasuda T."/>
            <person name="Iwayanagi T."/>
            <person name="Wagatsuma M."/>
            <person name="Shiratori A."/>
            <person name="Sudo H."/>
            <person name="Hosoiri T."/>
            <person name="Kaku Y."/>
            <person name="Kodaira H."/>
            <person name="Kondo H."/>
            <person name="Sugawara M."/>
            <person name="Takahashi M."/>
            <person name="Kanda K."/>
            <person name="Yokoi T."/>
            <person name="Furuya T."/>
            <person name="Kikkawa E."/>
            <person name="Omura Y."/>
            <person name="Abe K."/>
            <person name="Kamihara K."/>
            <person name="Katsuta N."/>
            <person name="Sato K."/>
            <person name="Tanikawa M."/>
            <person name="Yamazaki M."/>
            <person name="Ninomiya K."/>
            <person name="Ishibashi T."/>
            <person name="Yamashita H."/>
            <person name="Murakawa K."/>
            <person name="Fujimori K."/>
            <person name="Tanai H."/>
            <person name="Kimata M."/>
            <person name="Watanabe M."/>
            <person name="Hiraoka S."/>
            <person name="Chiba Y."/>
            <person name="Ishida S."/>
            <person name="Ono Y."/>
            <person name="Takiguchi S."/>
            <person name="Watanabe S."/>
            <person name="Yosida M."/>
            <person name="Hotuta T."/>
            <person name="Kusano J."/>
            <person name="Kanehori K."/>
            <person name="Takahashi-Fujii A."/>
            <person name="Hara H."/>
            <person name="Tanase T.-O."/>
            <person name="Nomura Y."/>
            <person name="Togiya S."/>
            <person name="Komai F."/>
            <person name="Hara R."/>
            <person name="Takeuchi K."/>
            <person name="Arita M."/>
            <person name="Imose N."/>
            <person name="Musashino K."/>
            <person name="Yuuki H."/>
            <person name="Oshima A."/>
            <person name="Sasaki N."/>
            <person name="Aotsuka S."/>
            <person name="Yoshikawa Y."/>
            <person name="Matsunawa H."/>
            <person name="Ichihara T."/>
            <person name="Shiohata N."/>
            <person name="Sano S."/>
            <person name="Moriya S."/>
            <person name="Momiyama H."/>
            <person name="Satoh N."/>
            <person name="Takami S."/>
            <person name="Terashima Y."/>
            <person name="Suzuki O."/>
            <person name="Nakagawa S."/>
            <person name="Senoh A."/>
            <person name="Mizoguchi H."/>
            <person name="Goto Y."/>
            <person name="Shimizu F."/>
            <person name="Wakebe H."/>
            <person name="Hishigaki H."/>
            <person name="Watanabe T."/>
            <person name="Sugiyama A."/>
            <person name="Takemoto M."/>
            <person name="Kawakami B."/>
            <person name="Yamazaki M."/>
            <person name="Watanabe K."/>
            <person name="Kumagai A."/>
            <person name="Itakura S."/>
            <person name="Fukuzumi Y."/>
            <person name="Fujimori Y."/>
            <person name="Komiyama M."/>
            <person name="Tashiro H."/>
            <person name="Tanigami A."/>
            <person name="Fujiwara T."/>
            <person name="Ono T."/>
            <person name="Yamada K."/>
            <person name="Fujii Y."/>
            <person name="Ozaki K."/>
            <person name="Hirao M."/>
            <person name="Ohmori Y."/>
            <person name="Kawabata A."/>
            <person name="Hikiji T."/>
            <person name="Kobatake N."/>
            <person name="Inagaki H."/>
            <person name="Ikema Y."/>
            <person name="Okamoto S."/>
            <person name="Okitani R."/>
            <person name="Kawakami T."/>
            <person name="Noguchi S."/>
            <person name="Itoh T."/>
            <person name="Shigeta K."/>
            <person name="Senba T."/>
            <person name="Matsumura K."/>
            <person name="Nakajima Y."/>
            <person name="Mizuno T."/>
            <person name="Morinaga M."/>
            <person name="Sasaki M."/>
            <person name="Togashi T."/>
            <person name="Oyama M."/>
            <person name="Hata H."/>
            <person name="Watanabe M."/>
            <person name="Komatsu T."/>
            <person name="Mizushima-Sugano J."/>
            <person name="Satoh T."/>
            <person name="Shirai Y."/>
            <person name="Takahashi Y."/>
            <person name="Nakagawa K."/>
            <person name="Okumura K."/>
            <person name="Nagase T."/>
            <person name="Nomura N."/>
            <person name="Kikuchi H."/>
            <person name="Masuho Y."/>
            <person name="Yamashita R."/>
            <person name="Nakai K."/>
            <person name="Yada T."/>
            <person name="Nakamura Y."/>
            <person name="Ohara O."/>
            <person name="Isogai T."/>
            <person name="Sugano S."/>
        </authorList>
    </citation>
    <scope>NUCLEOTIDE SEQUENCE [LARGE SCALE MRNA] (ISOFORMS 1; 4 AND 5)</scope>
    <scope>VARIANT MET-638</scope>
    <source>
        <tissue>Testis</tissue>
        <tissue>Thymus</tissue>
    </source>
</reference>
<reference key="4">
    <citation type="journal article" date="2004" name="Nature">
        <title>DNA sequence and analysis of human chromosome 9.</title>
        <authorList>
            <person name="Humphray S.J."/>
            <person name="Oliver K."/>
            <person name="Hunt A.R."/>
            <person name="Plumb R.W."/>
            <person name="Loveland J.E."/>
            <person name="Howe K.L."/>
            <person name="Andrews T.D."/>
            <person name="Searle S."/>
            <person name="Hunt S.E."/>
            <person name="Scott C.E."/>
            <person name="Jones M.C."/>
            <person name="Ainscough R."/>
            <person name="Almeida J.P."/>
            <person name="Ambrose K.D."/>
            <person name="Ashwell R.I.S."/>
            <person name="Babbage A.K."/>
            <person name="Babbage S."/>
            <person name="Bagguley C.L."/>
            <person name="Bailey J."/>
            <person name="Banerjee R."/>
            <person name="Barker D.J."/>
            <person name="Barlow K.F."/>
            <person name="Bates K."/>
            <person name="Beasley H."/>
            <person name="Beasley O."/>
            <person name="Bird C.P."/>
            <person name="Bray-Allen S."/>
            <person name="Brown A.J."/>
            <person name="Brown J.Y."/>
            <person name="Burford D."/>
            <person name="Burrill W."/>
            <person name="Burton J."/>
            <person name="Carder C."/>
            <person name="Carter N.P."/>
            <person name="Chapman J.C."/>
            <person name="Chen Y."/>
            <person name="Clarke G."/>
            <person name="Clark S.Y."/>
            <person name="Clee C.M."/>
            <person name="Clegg S."/>
            <person name="Collier R.E."/>
            <person name="Corby N."/>
            <person name="Crosier M."/>
            <person name="Cummings A.T."/>
            <person name="Davies J."/>
            <person name="Dhami P."/>
            <person name="Dunn M."/>
            <person name="Dutta I."/>
            <person name="Dyer L.W."/>
            <person name="Earthrowl M.E."/>
            <person name="Faulkner L."/>
            <person name="Fleming C.J."/>
            <person name="Frankish A."/>
            <person name="Frankland J.A."/>
            <person name="French L."/>
            <person name="Fricker D.G."/>
            <person name="Garner P."/>
            <person name="Garnett J."/>
            <person name="Ghori J."/>
            <person name="Gilbert J.G.R."/>
            <person name="Glison C."/>
            <person name="Grafham D.V."/>
            <person name="Gribble S."/>
            <person name="Griffiths C."/>
            <person name="Griffiths-Jones S."/>
            <person name="Grocock R."/>
            <person name="Guy J."/>
            <person name="Hall R.E."/>
            <person name="Hammond S."/>
            <person name="Harley J.L."/>
            <person name="Harrison E.S.I."/>
            <person name="Hart E.A."/>
            <person name="Heath P.D."/>
            <person name="Henderson C.D."/>
            <person name="Hopkins B.L."/>
            <person name="Howard P.J."/>
            <person name="Howden P.J."/>
            <person name="Huckle E."/>
            <person name="Johnson C."/>
            <person name="Johnson D."/>
            <person name="Joy A.A."/>
            <person name="Kay M."/>
            <person name="Keenan S."/>
            <person name="Kershaw J.K."/>
            <person name="Kimberley A.M."/>
            <person name="King A."/>
            <person name="Knights A."/>
            <person name="Laird G.K."/>
            <person name="Langford C."/>
            <person name="Lawlor S."/>
            <person name="Leongamornlert D.A."/>
            <person name="Leversha M."/>
            <person name="Lloyd C."/>
            <person name="Lloyd D.M."/>
            <person name="Lovell J."/>
            <person name="Martin S."/>
            <person name="Mashreghi-Mohammadi M."/>
            <person name="Matthews L."/>
            <person name="McLaren S."/>
            <person name="McLay K.E."/>
            <person name="McMurray A."/>
            <person name="Milne S."/>
            <person name="Nickerson T."/>
            <person name="Nisbett J."/>
            <person name="Nordsiek G."/>
            <person name="Pearce A.V."/>
            <person name="Peck A.I."/>
            <person name="Porter K.M."/>
            <person name="Pandian R."/>
            <person name="Pelan S."/>
            <person name="Phillimore B."/>
            <person name="Povey S."/>
            <person name="Ramsey Y."/>
            <person name="Rand V."/>
            <person name="Scharfe M."/>
            <person name="Sehra H.K."/>
            <person name="Shownkeen R."/>
            <person name="Sims S.K."/>
            <person name="Skuce C.D."/>
            <person name="Smith M."/>
            <person name="Steward C.A."/>
            <person name="Swarbreck D."/>
            <person name="Sycamore N."/>
            <person name="Tester J."/>
            <person name="Thorpe A."/>
            <person name="Tracey A."/>
            <person name="Tromans A."/>
            <person name="Thomas D.W."/>
            <person name="Wall M."/>
            <person name="Wallis J.M."/>
            <person name="West A.P."/>
            <person name="Whitehead S.L."/>
            <person name="Willey D.L."/>
            <person name="Williams S.A."/>
            <person name="Wilming L."/>
            <person name="Wray P.W."/>
            <person name="Young L."/>
            <person name="Ashurst J.L."/>
            <person name="Coulson A."/>
            <person name="Blocker H."/>
            <person name="Durbin R.M."/>
            <person name="Sulston J.E."/>
            <person name="Hubbard T."/>
            <person name="Jackson M.J."/>
            <person name="Bentley D.R."/>
            <person name="Beck S."/>
            <person name="Rogers J."/>
            <person name="Dunham I."/>
        </authorList>
    </citation>
    <scope>NUCLEOTIDE SEQUENCE [LARGE SCALE GENOMIC DNA]</scope>
</reference>
<reference key="5">
    <citation type="submission" date="2005-07" db="EMBL/GenBank/DDBJ databases">
        <authorList>
            <person name="Mural R.J."/>
            <person name="Istrail S."/>
            <person name="Sutton G.G."/>
            <person name="Florea L."/>
            <person name="Halpern A.L."/>
            <person name="Mobarry C.M."/>
            <person name="Lippert R."/>
            <person name="Walenz B."/>
            <person name="Shatkay H."/>
            <person name="Dew I."/>
            <person name="Miller J.R."/>
            <person name="Flanigan M.J."/>
            <person name="Edwards N.J."/>
            <person name="Bolanos R."/>
            <person name="Fasulo D."/>
            <person name="Halldorsson B.V."/>
            <person name="Hannenhalli S."/>
            <person name="Turner R."/>
            <person name="Yooseph S."/>
            <person name="Lu F."/>
            <person name="Nusskern D.R."/>
            <person name="Shue B.C."/>
            <person name="Zheng X.H."/>
            <person name="Zhong F."/>
            <person name="Delcher A.L."/>
            <person name="Huson D.H."/>
            <person name="Kravitz S.A."/>
            <person name="Mouchard L."/>
            <person name="Reinert K."/>
            <person name="Remington K.A."/>
            <person name="Clark A.G."/>
            <person name="Waterman M.S."/>
            <person name="Eichler E.E."/>
            <person name="Adams M.D."/>
            <person name="Hunkapiller M.W."/>
            <person name="Myers E.W."/>
            <person name="Venter J.C."/>
        </authorList>
    </citation>
    <scope>NUCLEOTIDE SEQUENCE [LARGE SCALE GENOMIC DNA]</scope>
</reference>
<reference key="6">
    <citation type="journal article" date="2004" name="Genome Res.">
        <title>The status, quality, and expansion of the NIH full-length cDNA project: the Mammalian Gene Collection (MGC).</title>
        <authorList>
            <consortium name="The MGC Project Team"/>
        </authorList>
    </citation>
    <scope>NUCLEOTIDE SEQUENCE [LARGE SCALE MRNA] (ISOFORM 3)</scope>
    <source>
        <tissue>Lymph</tissue>
    </source>
</reference>
<reference key="7">
    <citation type="journal article" date="2003" name="J. Biomed. Sci.">
        <title>Ciz1, Cip1 interacting zinc finger protein 1 binds the consensus DNA sequence ARYSR(0-2)YYAC.</title>
        <authorList>
            <person name="Warder D.E."/>
            <person name="Keherly M.J."/>
        </authorList>
    </citation>
    <scope>NUCLEOTIDE SEQUENCE [MRNA] OF 2-898 (ISOFORM 1)</scope>
    <scope>NUCLEOTIDE SEQUENCE [MRNA] OF 50-898 (ISOFORM 2)</scope>
    <source>
        <tissue>Medulloblastoma</tissue>
    </source>
</reference>
<reference key="8">
    <citation type="journal article" date="1999" name="Hum. Mol. Genet.">
        <title>Extensive gene order differences within regions of conserved synteny between the Fugu and human genomes: implications for chromosomal evolution and the cloning of disease genes.</title>
        <authorList>
            <person name="Gilley J."/>
            <person name="Fried M."/>
        </authorList>
    </citation>
    <scope>NUCLEOTIDE SEQUENCE [GENOMIC DNA] OF 649-898</scope>
</reference>
<reference key="9">
    <citation type="journal article" date="2008" name="Proc. Natl. Acad. Sci. U.S.A.">
        <title>A quantitative atlas of mitotic phosphorylation.</title>
        <authorList>
            <person name="Dephoure N."/>
            <person name="Zhou C."/>
            <person name="Villen J."/>
            <person name="Beausoleil S.A."/>
            <person name="Bakalarski C.E."/>
            <person name="Elledge S.J."/>
            <person name="Gygi S.P."/>
        </authorList>
    </citation>
    <scope>IDENTIFICATION BY MASS SPECTROMETRY [LARGE SCALE ANALYSIS]</scope>
    <source>
        <tissue>Cervix carcinoma</tissue>
    </source>
</reference>
<reference key="10">
    <citation type="journal article" date="2009" name="Sci. Signal.">
        <title>Quantitative phosphoproteomic analysis of T cell receptor signaling reveals system-wide modulation of protein-protein interactions.</title>
        <authorList>
            <person name="Mayya V."/>
            <person name="Lundgren D.H."/>
            <person name="Hwang S.-I."/>
            <person name="Rezaul K."/>
            <person name="Wu L."/>
            <person name="Eng J.K."/>
            <person name="Rodionov V."/>
            <person name="Han D.K."/>
        </authorList>
    </citation>
    <scope>PHOSPHORYLATION [LARGE SCALE ANALYSIS] AT THR-567</scope>
    <scope>IDENTIFICATION BY MASS SPECTROMETRY [LARGE SCALE ANALYSIS]</scope>
    <source>
        <tissue>Leukemic T-cell</tissue>
    </source>
</reference>
<reference key="11">
    <citation type="journal article" date="2010" name="Sci. Signal.">
        <title>Quantitative phosphoproteomics reveals widespread full phosphorylation site occupancy during mitosis.</title>
        <authorList>
            <person name="Olsen J.V."/>
            <person name="Vermeulen M."/>
            <person name="Santamaria A."/>
            <person name="Kumar C."/>
            <person name="Miller M.L."/>
            <person name="Jensen L.J."/>
            <person name="Gnad F."/>
            <person name="Cox J."/>
            <person name="Jensen T.S."/>
            <person name="Nigg E.A."/>
            <person name="Brunak S."/>
            <person name="Mann M."/>
        </authorList>
    </citation>
    <scope>IDENTIFICATION BY MASS SPECTROMETRY [LARGE SCALE ANALYSIS]</scope>
    <source>
        <tissue>Cervix carcinoma</tissue>
    </source>
</reference>
<reference key="12">
    <citation type="journal article" date="2012" name="Ann. Neurol.">
        <title>Mutations in CIZ1 cause adult onset primary cervical dystonia.</title>
        <authorList>
            <person name="Xiao J."/>
            <person name="Uitti R.J."/>
            <person name="Zhao Y."/>
            <person name="Vemula S.R."/>
            <person name="Perlmutter J.S."/>
            <person name="Wszolek Z.K."/>
            <person name="Maraganore D.M."/>
            <person name="Auburger G."/>
            <person name="Leube B."/>
            <person name="Lehnhoff K."/>
            <person name="Ledoux M.S."/>
        </authorList>
    </citation>
    <scope>POSSIBLE INVOLVEMENT IN ADULT ONSET PRIMARY CERVICAL DYSTONIA</scope>
    <scope>VARIANTS SER-47; LEU-50; GLY-264; GLU-394; PHE-577 AND MET-672</scope>
</reference>
<reference key="13">
    <citation type="journal article" date="2013" name="J. Proteome Res.">
        <title>Toward a comprehensive characterization of a human cancer cell phosphoproteome.</title>
        <authorList>
            <person name="Zhou H."/>
            <person name="Di Palma S."/>
            <person name="Preisinger C."/>
            <person name="Peng M."/>
            <person name="Polat A.N."/>
            <person name="Heck A.J."/>
            <person name="Mohammed S."/>
        </authorList>
    </citation>
    <scope>PHOSPHORYLATION [LARGE SCALE ANALYSIS] AT SER-209; THR-244; SER-350; SER-547; SER-821 AND SER-838</scope>
    <scope>IDENTIFICATION BY MASS SPECTROMETRY [LARGE SCALE ANALYSIS]</scope>
    <source>
        <tissue>Cervix carcinoma</tissue>
        <tissue>Erythroleukemia</tissue>
    </source>
</reference>
<reference key="14">
    <citation type="journal article" date="2014" name="Nat. Struct. Mol. Biol.">
        <title>Uncovering global SUMOylation signaling networks in a site-specific manner.</title>
        <authorList>
            <person name="Hendriks I.A."/>
            <person name="D'Souza R.C."/>
            <person name="Yang B."/>
            <person name="Verlaan-de Vries M."/>
            <person name="Mann M."/>
            <person name="Vertegaal A.C."/>
        </authorList>
    </citation>
    <scope>SUMOYLATION [LARGE SCALE ANALYSIS] AT LYS-705</scope>
    <scope>IDENTIFICATION BY MASS SPECTROMETRY [LARGE SCALE ANALYSIS]</scope>
</reference>
<reference key="15">
    <citation type="journal article" date="2015" name="Cell Rep.">
        <title>SUMO-2 orchestrates chromatin modifiers in response to DNA damage.</title>
        <authorList>
            <person name="Hendriks I.A."/>
            <person name="Treffers L.W."/>
            <person name="Verlaan-de Vries M."/>
            <person name="Olsen J.V."/>
            <person name="Vertegaal A.C."/>
        </authorList>
    </citation>
    <scope>SUMOYLATION [LARGE SCALE ANALYSIS] AT LYS-705</scope>
    <scope>IDENTIFICATION BY MASS SPECTROMETRY [LARGE SCALE ANALYSIS]</scope>
</reference>
<reference key="16">
    <citation type="journal article" date="2015" name="Mol. Cell. Proteomics">
        <title>System-wide analysis of SUMOylation dynamics in response to replication stress reveals novel small ubiquitin-like modified target proteins and acceptor lysines relevant for genome stability.</title>
        <authorList>
            <person name="Xiao Z."/>
            <person name="Chang J.G."/>
            <person name="Hendriks I.A."/>
            <person name="Sigurdsson J.O."/>
            <person name="Olsen J.V."/>
            <person name="Vertegaal A.C."/>
        </authorList>
    </citation>
    <scope>SUMOYLATION [LARGE SCALE ANALYSIS] AT LYS-705</scope>
    <scope>IDENTIFICATION BY MASS SPECTROMETRY [LARGE SCALE ANALYSIS]</scope>
</reference>
<reference key="17">
    <citation type="journal article" date="2017" name="Nat. Struct. Mol. Biol.">
        <title>Site-specific mapping of the human SUMO proteome reveals co-modification with phosphorylation.</title>
        <authorList>
            <person name="Hendriks I.A."/>
            <person name="Lyon D."/>
            <person name="Young C."/>
            <person name="Jensen L.J."/>
            <person name="Vertegaal A.C."/>
            <person name="Nielsen M.L."/>
        </authorList>
    </citation>
    <scope>SUMOYLATION [LARGE SCALE ANALYSIS] AT LYS-280; LYS-340; LYS-401; LYS-549; LYS-588; LYS-680; LYS-705; LYS-830 AND LYS-879</scope>
    <scope>IDENTIFICATION BY MASS SPECTROMETRY [LARGE SCALE ANALYSIS]</scope>
</reference>
<evidence type="ECO:0000255" key="1">
    <source>
        <dbReference type="PROSITE-ProRule" id="PRU00130"/>
    </source>
</evidence>
<evidence type="ECO:0000256" key="2">
    <source>
        <dbReference type="SAM" id="MobiDB-lite"/>
    </source>
</evidence>
<evidence type="ECO:0000269" key="3">
    <source>
    </source>
</evidence>
<evidence type="ECO:0000269" key="4">
    <source>
    </source>
</evidence>
<evidence type="ECO:0000269" key="5">
    <source ref="2"/>
</evidence>
<evidence type="ECO:0000303" key="6">
    <source>
    </source>
</evidence>
<evidence type="ECO:0000303" key="7">
    <source>
    </source>
</evidence>
<evidence type="ECO:0000303" key="8">
    <source>
    </source>
</evidence>
<evidence type="ECO:0000305" key="9"/>
<evidence type="ECO:0007744" key="10">
    <source>
    </source>
</evidence>
<evidence type="ECO:0007744" key="11">
    <source>
    </source>
</evidence>
<evidence type="ECO:0007744" key="12">
    <source>
    </source>
</evidence>
<evidence type="ECO:0007744" key="13">
    <source>
    </source>
</evidence>
<evidence type="ECO:0007744" key="14">
    <source>
    </source>
</evidence>
<evidence type="ECO:0007744" key="15">
    <source>
    </source>
</evidence>
<evidence type="ECO:0007829" key="16">
    <source>
        <dbReference type="PDB" id="7X39"/>
    </source>
</evidence>
<accession>Q9ULV3</accession>
<accession>A8K9J8</accession>
<accession>B4E131</accession>
<accession>B7ZAS8</accession>
<accession>Q5SYW3</accession>
<accession>Q5SYW5</accession>
<accession>Q8WU72</accession>
<accession>Q9H868</accession>
<accession>Q9NYM8</accession>
<accession>Q9UHK4</accession>
<accession>Q9Y3F9</accession>
<accession>Q9Y3G0</accession>
<sequence>MFSQQQQQQLQQQQQQLQQLQQQQLQQQQLQQQQLLQLQQLLQQSPPQAPLPMAVSRGLPPQQPQQPLLNLQGTNSASLLNGSMLQRALLLQQLQGLDQFAMPPATYDTAGLTMPTATLGNLRGYGMASPGLAAPSLTPPQLATPNLQQFFPQATRQSLLGPPPVGVPMNPSQFNLSGRNPQKQARTSSSTTPNRKDSSSQTMPVEDKSDPPEGSEEAAEPRMDTPEDQDLPPCPEDIAKEKRTPAPEPEPCEASELPAKRLRSSEEPTEKEPPGQLQVKAQPQARMTVPKQTQTPDLLPEALEAQVLPRFQPRVLQVQAQVQSQTQPRIPSTDTQVQPKLQKQAQTQTSPEHLVLQQKQVQPQLQQEAEPQKQVQPQVQPQAHSQGPRQVQLQQEAEPLKQVQPQVQPQAHSQPPRQVQLQLQKQVQTQTYPQVHTQAQPSVQPQEHPPAQVSVQPPEQTHEQPHTQPQVSLLAPEQTPVVVHVCGLEMPPDAVEAGGGMEKTLPEPVGTQVSMEEIQNESACGLDVGECENRAREMPGVWGAGGSLKVTILQSSDSRAFSTVPLTPVPRPSDSVSSTPAATSTPSKQALQFFCYICKASCSSQQEFQDHMSEPQHQQRLGEIQHMSQACLLSLLPVPRDVLETEDEEPPPRRWCNTCQLYYMGDLIQHRRTQDHKIAKQSLRPFCTVCNRYFKTPRKFVEHVKSQGHKDKAKELKSLEKEIAGQDEDHFITVDAVGCFEGDEEEEEDDEDEEEIEVEEELCKQVRSRDISREEWKGSETYSPNTAYGVDFLVPVMGYICRICHKFYHSNSGAQLSHCKSLGHFENLQKYKAAKNPSPTTRPVSRRCAINARNALTALFTSSGRPPSQPNTQDKTPSKVTARPSQPPLPRRSTRLKT</sequence>
<protein>
    <recommendedName>
        <fullName>Cip1-interacting zinc finger protein</fullName>
    </recommendedName>
    <alternativeName>
        <fullName>CDKN1A-interacting zinc finger protein 1</fullName>
    </alternativeName>
    <alternativeName>
        <fullName>Nuclear protein NP94</fullName>
    </alternativeName>
    <alternativeName>
        <fullName>Zinc finger protein 356</fullName>
    </alternativeName>
</protein>
<dbReference type="EMBL" id="AB030835">
    <property type="protein sequence ID" value="BAA85783.1"/>
    <property type="molecule type" value="mRNA"/>
</dbReference>
<dbReference type="EMBL" id="EF467915">
    <property type="protein sequence ID" value="ABO43037.1"/>
    <property type="molecule type" value="Genomic_DNA"/>
</dbReference>
<dbReference type="EMBL" id="AK023978">
    <property type="protein sequence ID" value="BAB14750.1"/>
    <property type="molecule type" value="mRNA"/>
</dbReference>
<dbReference type="EMBL" id="AK292713">
    <property type="protein sequence ID" value="BAF85402.1"/>
    <property type="molecule type" value="mRNA"/>
</dbReference>
<dbReference type="EMBL" id="AK303636">
    <property type="protein sequence ID" value="BAG64643.1"/>
    <property type="molecule type" value="mRNA"/>
</dbReference>
<dbReference type="EMBL" id="AK316393">
    <property type="protein sequence ID" value="BAH14764.1"/>
    <property type="molecule type" value="mRNA"/>
</dbReference>
<dbReference type="EMBL" id="AL590708">
    <property type="status" value="NOT_ANNOTATED_CDS"/>
    <property type="molecule type" value="Genomic_DNA"/>
</dbReference>
<dbReference type="EMBL" id="CH471090">
    <property type="protein sequence ID" value="EAW87752.1"/>
    <property type="molecule type" value="Genomic_DNA"/>
</dbReference>
<dbReference type="EMBL" id="CH471090">
    <property type="protein sequence ID" value="EAW87753.1"/>
    <property type="molecule type" value="Genomic_DNA"/>
</dbReference>
<dbReference type="EMBL" id="CH471090">
    <property type="protein sequence ID" value="EAW87754.1"/>
    <property type="molecule type" value="Genomic_DNA"/>
</dbReference>
<dbReference type="EMBL" id="BC021163">
    <property type="protein sequence ID" value="AAH21163.1"/>
    <property type="molecule type" value="mRNA"/>
</dbReference>
<dbReference type="EMBL" id="AF159027">
    <property type="protein sequence ID" value="AAF23231.1"/>
    <property type="status" value="ALT_INIT"/>
    <property type="molecule type" value="mRNA"/>
</dbReference>
<dbReference type="EMBL" id="AF234161">
    <property type="protein sequence ID" value="AAF37882.1"/>
    <property type="status" value="ALT_INIT"/>
    <property type="molecule type" value="mRNA"/>
</dbReference>
<dbReference type="EMBL" id="Y17453">
    <property type="protein sequence ID" value="CAB44346.1"/>
    <property type="molecule type" value="Genomic_DNA"/>
</dbReference>
<dbReference type="EMBL" id="Y17454">
    <property type="protein sequence ID" value="CAB44347.1"/>
    <property type="molecule type" value="Genomic_DNA"/>
</dbReference>
<dbReference type="CCDS" id="CCDS48033.1">
    <molecule id="Q9ULV3-3"/>
</dbReference>
<dbReference type="CCDS" id="CCDS48034.1">
    <molecule id="Q9ULV3-4"/>
</dbReference>
<dbReference type="CCDS" id="CCDS59147.1">
    <molecule id="Q9ULV3-5"/>
</dbReference>
<dbReference type="CCDS" id="CCDS6894.1">
    <molecule id="Q9ULV3-1"/>
</dbReference>
<dbReference type="RefSeq" id="NP_001124487.1">
    <molecule id="Q9ULV3-4"/>
    <property type="nucleotide sequence ID" value="NM_001131015.2"/>
</dbReference>
<dbReference type="RefSeq" id="NP_001124488.1">
    <molecule id="Q9ULV3-1"/>
    <property type="nucleotide sequence ID" value="NM_001131016.2"/>
</dbReference>
<dbReference type="RefSeq" id="NP_001124489.1">
    <property type="nucleotide sequence ID" value="NM_001131017.1"/>
</dbReference>
<dbReference type="RefSeq" id="NP_001124490.1">
    <molecule id="Q9ULV3-3"/>
    <property type="nucleotide sequence ID" value="NM_001131018.2"/>
</dbReference>
<dbReference type="RefSeq" id="NP_001244904.1">
    <property type="nucleotide sequence ID" value="NM_001257975.1"/>
</dbReference>
<dbReference type="RefSeq" id="NP_001244905.1">
    <molecule id="Q9ULV3-5"/>
    <property type="nucleotide sequence ID" value="NM_001257976.2"/>
</dbReference>
<dbReference type="RefSeq" id="NP_036259.2">
    <molecule id="Q9ULV3-1"/>
    <property type="nucleotide sequence ID" value="NM_012127.2"/>
</dbReference>
<dbReference type="RefSeq" id="XP_005251945.2">
    <property type="nucleotide sequence ID" value="XM_005251888.3"/>
</dbReference>
<dbReference type="RefSeq" id="XP_005251948.2">
    <property type="nucleotide sequence ID" value="XM_005251891.3"/>
</dbReference>
<dbReference type="RefSeq" id="XP_005251950.4">
    <property type="nucleotide sequence ID" value="XM_005251893.4"/>
</dbReference>
<dbReference type="RefSeq" id="XP_006717102.2">
    <property type="nucleotide sequence ID" value="XM_006717039.3"/>
</dbReference>
<dbReference type="RefSeq" id="XP_016870085.1">
    <property type="nucleotide sequence ID" value="XM_017014596.1"/>
</dbReference>
<dbReference type="PDB" id="7X39">
    <property type="method" value="X-ray"/>
    <property type="resolution" value="2.85 A"/>
    <property type="chains" value="A/B/C/D=539-569"/>
</dbReference>
<dbReference type="PDBsum" id="7X39"/>
<dbReference type="SMR" id="Q9ULV3"/>
<dbReference type="BioGRID" id="117325">
    <property type="interactions" value="57"/>
</dbReference>
<dbReference type="FunCoup" id="Q9ULV3">
    <property type="interactions" value="2736"/>
</dbReference>
<dbReference type="IntAct" id="Q9ULV3">
    <property type="interactions" value="34"/>
</dbReference>
<dbReference type="MINT" id="Q9ULV3"/>
<dbReference type="STRING" id="9606.ENSP00000439244"/>
<dbReference type="CarbonylDB" id="Q9ULV3"/>
<dbReference type="GlyGen" id="Q9ULV3">
    <property type="glycosylation" value="3 sites, 1 O-linked glycan (1 site)"/>
</dbReference>
<dbReference type="iPTMnet" id="Q9ULV3"/>
<dbReference type="PhosphoSitePlus" id="Q9ULV3"/>
<dbReference type="SwissPalm" id="Q9ULV3"/>
<dbReference type="BioMuta" id="CIZ1"/>
<dbReference type="DMDM" id="296434448"/>
<dbReference type="jPOST" id="Q9ULV3"/>
<dbReference type="MassIVE" id="Q9ULV3"/>
<dbReference type="PaxDb" id="9606-ENSP00000439244"/>
<dbReference type="PeptideAtlas" id="Q9ULV3"/>
<dbReference type="ProteomicsDB" id="7084"/>
<dbReference type="ProteomicsDB" id="85130">
    <molecule id="Q9ULV3-1"/>
</dbReference>
<dbReference type="ProteomicsDB" id="85131">
    <molecule id="Q9ULV3-2"/>
</dbReference>
<dbReference type="ProteomicsDB" id="85132">
    <molecule id="Q9ULV3-3"/>
</dbReference>
<dbReference type="ProteomicsDB" id="85133">
    <molecule id="Q9ULV3-4"/>
</dbReference>
<dbReference type="Pumba" id="Q9ULV3"/>
<dbReference type="Antibodypedia" id="17368">
    <property type="antibodies" value="108 antibodies from 27 providers"/>
</dbReference>
<dbReference type="DNASU" id="25792"/>
<dbReference type="Ensembl" id="ENST00000372938.10">
    <molecule id="Q9ULV3-1"/>
    <property type="protein sequence ID" value="ENSP00000362029.5"/>
    <property type="gene ID" value="ENSG00000148337.22"/>
</dbReference>
<dbReference type="Ensembl" id="ENST00000372948.7">
    <molecule id="Q9ULV3-4"/>
    <property type="protein sequence ID" value="ENSP00000362039.3"/>
    <property type="gene ID" value="ENSG00000148337.22"/>
</dbReference>
<dbReference type="Ensembl" id="ENST00000372954.5">
    <molecule id="Q9ULV3-3"/>
    <property type="protein sequence ID" value="ENSP00000362045.1"/>
    <property type="gene ID" value="ENSG00000148337.22"/>
</dbReference>
<dbReference type="Ensembl" id="ENST00000629610.2">
    <molecule id="Q9ULV3-5"/>
    <property type="protein sequence ID" value="ENSP00000486816.1"/>
    <property type="gene ID" value="ENSG00000148337.22"/>
</dbReference>
<dbReference type="Ensembl" id="ENST00000634901.1">
    <molecule id="Q9ULV3-1"/>
    <property type="protein sequence ID" value="ENSP00000489425.1"/>
    <property type="gene ID" value="ENSG00000148337.22"/>
</dbReference>
<dbReference type="GeneID" id="25792"/>
<dbReference type="KEGG" id="hsa:25792"/>
<dbReference type="MANE-Select" id="ENST00000372938.10">
    <property type="protein sequence ID" value="ENSP00000362029.5"/>
    <property type="RefSeq nucleotide sequence ID" value="NM_001131016.2"/>
    <property type="RefSeq protein sequence ID" value="NP_001124488.1"/>
</dbReference>
<dbReference type="UCSC" id="uc004btt.4">
    <molecule id="Q9ULV3-1"/>
    <property type="organism name" value="human"/>
</dbReference>
<dbReference type="AGR" id="HGNC:16744"/>
<dbReference type="CTD" id="25792"/>
<dbReference type="DisGeNET" id="25792"/>
<dbReference type="GeneCards" id="CIZ1"/>
<dbReference type="HGNC" id="HGNC:16744">
    <property type="gene designation" value="CIZ1"/>
</dbReference>
<dbReference type="HPA" id="ENSG00000148337">
    <property type="expression patterns" value="Low tissue specificity"/>
</dbReference>
<dbReference type="MalaCards" id="CIZ1"/>
<dbReference type="MIM" id="611420">
    <property type="type" value="gene"/>
</dbReference>
<dbReference type="neXtProt" id="NX_Q9ULV3"/>
<dbReference type="OpenTargets" id="ENSG00000148337"/>
<dbReference type="Orphanet" id="420492">
    <property type="disease" value="Adult-onset cervical dystonia, DYT23 type"/>
</dbReference>
<dbReference type="PharmGKB" id="PA134883336"/>
<dbReference type="VEuPathDB" id="HostDB:ENSG00000148337"/>
<dbReference type="eggNOG" id="ENOG502RYYN">
    <property type="taxonomic scope" value="Eukaryota"/>
</dbReference>
<dbReference type="GeneTree" id="ENSGT00440000039084"/>
<dbReference type="HOGENOM" id="CLU_018344_0_0_1"/>
<dbReference type="InParanoid" id="Q9ULV3"/>
<dbReference type="OrthoDB" id="6378952at2759"/>
<dbReference type="PAN-GO" id="Q9ULV3">
    <property type="GO annotations" value="1 GO annotation based on evolutionary models"/>
</dbReference>
<dbReference type="PhylomeDB" id="Q9ULV3"/>
<dbReference type="TreeFam" id="TF332388"/>
<dbReference type="PathwayCommons" id="Q9ULV3"/>
<dbReference type="SignaLink" id="Q9ULV3"/>
<dbReference type="BioGRID-ORCS" id="25792">
    <property type="hits" value="22 hits in 1159 CRISPR screens"/>
</dbReference>
<dbReference type="ChiTaRS" id="CIZ1">
    <property type="organism name" value="human"/>
</dbReference>
<dbReference type="GeneWiki" id="CIZ1"/>
<dbReference type="GenomeRNAi" id="25792"/>
<dbReference type="Pharos" id="Q9ULV3">
    <property type="development level" value="Tbio"/>
</dbReference>
<dbReference type="PRO" id="PR:Q9ULV3"/>
<dbReference type="Proteomes" id="UP000005640">
    <property type="component" value="Chromosome 9"/>
</dbReference>
<dbReference type="RNAct" id="Q9ULV3">
    <property type="molecule type" value="protein"/>
</dbReference>
<dbReference type="Bgee" id="ENSG00000148337">
    <property type="expression patterns" value="Expressed in right hemisphere of cerebellum and 199 other cell types or tissues"/>
</dbReference>
<dbReference type="ExpressionAtlas" id="Q9ULV3">
    <property type="expression patterns" value="baseline and differential"/>
</dbReference>
<dbReference type="GO" id="GO:0005654">
    <property type="term" value="C:nucleoplasm"/>
    <property type="evidence" value="ECO:0000314"/>
    <property type="project" value="HPA"/>
</dbReference>
<dbReference type="GO" id="GO:0005634">
    <property type="term" value="C:nucleus"/>
    <property type="evidence" value="ECO:0000314"/>
    <property type="project" value="UniProtKB"/>
</dbReference>
<dbReference type="GO" id="GO:0005886">
    <property type="term" value="C:plasma membrane"/>
    <property type="evidence" value="ECO:0000314"/>
    <property type="project" value="HPA"/>
</dbReference>
<dbReference type="GO" id="GO:0030332">
    <property type="term" value="F:cyclin binding"/>
    <property type="evidence" value="ECO:0007669"/>
    <property type="project" value="Ensembl"/>
</dbReference>
<dbReference type="GO" id="GO:0003676">
    <property type="term" value="F:nucleic acid binding"/>
    <property type="evidence" value="ECO:0007669"/>
    <property type="project" value="InterPro"/>
</dbReference>
<dbReference type="GO" id="GO:0008270">
    <property type="term" value="F:zinc ion binding"/>
    <property type="evidence" value="ECO:0000304"/>
    <property type="project" value="ProtInc"/>
</dbReference>
<dbReference type="GO" id="GO:0051457">
    <property type="term" value="P:maintenance of protein location in nucleus"/>
    <property type="evidence" value="ECO:0007669"/>
    <property type="project" value="Ensembl"/>
</dbReference>
<dbReference type="GO" id="GO:0032298">
    <property type="term" value="P:positive regulation of DNA-templated DNA replication initiation"/>
    <property type="evidence" value="ECO:0007669"/>
    <property type="project" value="Ensembl"/>
</dbReference>
<dbReference type="GO" id="GO:0060816">
    <property type="term" value="P:random inactivation of X chromosome"/>
    <property type="evidence" value="ECO:0007669"/>
    <property type="project" value="Ensembl"/>
</dbReference>
<dbReference type="FunFam" id="3.30.160.60:FF:000855">
    <property type="entry name" value="CDKN1A interacting zinc finger protein 1"/>
    <property type="match status" value="1"/>
</dbReference>
<dbReference type="Gene3D" id="3.30.160.60">
    <property type="entry name" value="Classic Zinc Finger"/>
    <property type="match status" value="1"/>
</dbReference>
<dbReference type="InterPro" id="IPR026811">
    <property type="entry name" value="CIZ1"/>
</dbReference>
<dbReference type="InterPro" id="IPR000690">
    <property type="entry name" value="Matrin/U1-C_Znf_C2H2"/>
</dbReference>
<dbReference type="InterPro" id="IPR003604">
    <property type="entry name" value="Matrin/U1-like-C_Znf_C2H2"/>
</dbReference>
<dbReference type="InterPro" id="IPR056345">
    <property type="entry name" value="Znf-C2H2_CIZ1"/>
</dbReference>
<dbReference type="InterPro" id="IPR022755">
    <property type="entry name" value="Znf_C2H2_jaz"/>
</dbReference>
<dbReference type="InterPro" id="IPR036236">
    <property type="entry name" value="Znf_C2H2_sf"/>
</dbReference>
<dbReference type="InterPro" id="IPR013087">
    <property type="entry name" value="Znf_C2H2_type"/>
</dbReference>
<dbReference type="PANTHER" id="PTHR15491">
    <property type="match status" value="1"/>
</dbReference>
<dbReference type="PANTHER" id="PTHR15491:SF9">
    <property type="entry name" value="CIP1-INTERACTING ZINC FINGER PROTEIN"/>
    <property type="match status" value="1"/>
</dbReference>
<dbReference type="Pfam" id="PF23330">
    <property type="entry name" value="zf-C2H2_14"/>
    <property type="match status" value="1"/>
</dbReference>
<dbReference type="Pfam" id="PF12171">
    <property type="entry name" value="zf-C2H2_jaz"/>
    <property type="match status" value="1"/>
</dbReference>
<dbReference type="SMART" id="SM00355">
    <property type="entry name" value="ZnF_C2H2"/>
    <property type="match status" value="3"/>
</dbReference>
<dbReference type="SMART" id="SM00451">
    <property type="entry name" value="ZnF_U1"/>
    <property type="match status" value="3"/>
</dbReference>
<dbReference type="SUPFAM" id="SSF57667">
    <property type="entry name" value="beta-beta-alpha zinc fingers"/>
    <property type="match status" value="2"/>
</dbReference>
<dbReference type="PROSITE" id="PS50171">
    <property type="entry name" value="ZF_MATRIN"/>
    <property type="match status" value="1"/>
</dbReference>
<dbReference type="PROSITE" id="PS00028">
    <property type="entry name" value="ZINC_FINGER_C2H2_1"/>
    <property type="match status" value="2"/>
</dbReference>